<evidence type="ECO:0000255" key="1">
    <source>
        <dbReference type="HAMAP-Rule" id="MF_00316"/>
    </source>
</evidence>
<sequence length="200" mass="22451">MKRVNVILAGGASRRFGEPKAFAKWKGGMFYEQAKKAFGGGETVIISRPEHIKKFLSNRERHVLADEPRFRGMGPLAGIYTAMKQTEGETFTVISCDTPLVTRKTMVALEMKLTGNLDAVIPVCKNREQPLLAVYHKRVQDVLFDQLTQNKLKMTDTLKRLSVCYVQAEDIGAGPEEFANINTQDDYTRLLAHVESSNQD</sequence>
<reference key="1">
    <citation type="journal article" date="2007" name="Nat. Biotechnol.">
        <title>Comparative analysis of the complete genome sequence of the plant growth-promoting bacterium Bacillus amyloliquefaciens FZB42.</title>
        <authorList>
            <person name="Chen X.H."/>
            <person name="Koumoutsi A."/>
            <person name="Scholz R."/>
            <person name="Eisenreich A."/>
            <person name="Schneider K."/>
            <person name="Heinemeyer I."/>
            <person name="Morgenstern B."/>
            <person name="Voss B."/>
            <person name="Hess W.R."/>
            <person name="Reva O."/>
            <person name="Junge H."/>
            <person name="Voigt B."/>
            <person name="Jungblut P.R."/>
            <person name="Vater J."/>
            <person name="Suessmuth R."/>
            <person name="Liesegang H."/>
            <person name="Strittmatter A."/>
            <person name="Gottschalk G."/>
            <person name="Borriss R."/>
        </authorList>
    </citation>
    <scope>NUCLEOTIDE SEQUENCE [LARGE SCALE GENOMIC DNA]</scope>
    <source>
        <strain>DSM 23117 / BGSC 10A6 / LMG 26770 / FZB42</strain>
    </source>
</reference>
<gene>
    <name evidence="1" type="primary">mobA</name>
    <name type="ordered locus">RBAM_014020</name>
</gene>
<accession>A7Z439</accession>
<feature type="chain" id="PRO_1000115788" description="Probable molybdenum cofactor guanylyltransferase">
    <location>
        <begin position="1"/>
        <end position="200"/>
    </location>
</feature>
<feature type="binding site" evidence="1">
    <location>
        <begin position="8"/>
        <end position="10"/>
    </location>
    <ligand>
        <name>GTP</name>
        <dbReference type="ChEBI" id="CHEBI:37565"/>
    </ligand>
</feature>
<feature type="binding site" evidence="1">
    <location>
        <position position="20"/>
    </location>
    <ligand>
        <name>GTP</name>
        <dbReference type="ChEBI" id="CHEBI:37565"/>
    </ligand>
</feature>
<feature type="binding site" evidence="1">
    <location>
        <position position="66"/>
    </location>
    <ligand>
        <name>GTP</name>
        <dbReference type="ChEBI" id="CHEBI:37565"/>
    </ligand>
</feature>
<feature type="binding site" evidence="1">
    <location>
        <position position="97"/>
    </location>
    <ligand>
        <name>GTP</name>
        <dbReference type="ChEBI" id="CHEBI:37565"/>
    </ligand>
</feature>
<feature type="binding site" evidence="1">
    <location>
        <position position="97"/>
    </location>
    <ligand>
        <name>Mg(2+)</name>
        <dbReference type="ChEBI" id="CHEBI:18420"/>
    </ligand>
</feature>
<dbReference type="EC" id="2.7.7.77" evidence="1"/>
<dbReference type="EMBL" id="CP000560">
    <property type="protein sequence ID" value="ABS73765.1"/>
    <property type="molecule type" value="Genomic_DNA"/>
</dbReference>
<dbReference type="RefSeq" id="WP_012117449.1">
    <property type="nucleotide sequence ID" value="NC_009725.2"/>
</dbReference>
<dbReference type="SMR" id="A7Z439"/>
<dbReference type="GeneID" id="93080536"/>
<dbReference type="KEGG" id="bay:RBAM_014020"/>
<dbReference type="HOGENOM" id="CLU_055597_2_0_9"/>
<dbReference type="Proteomes" id="UP000001120">
    <property type="component" value="Chromosome"/>
</dbReference>
<dbReference type="GO" id="GO:0005737">
    <property type="term" value="C:cytoplasm"/>
    <property type="evidence" value="ECO:0007669"/>
    <property type="project" value="UniProtKB-SubCell"/>
</dbReference>
<dbReference type="GO" id="GO:0005525">
    <property type="term" value="F:GTP binding"/>
    <property type="evidence" value="ECO:0007669"/>
    <property type="project" value="UniProtKB-UniRule"/>
</dbReference>
<dbReference type="GO" id="GO:0046872">
    <property type="term" value="F:metal ion binding"/>
    <property type="evidence" value="ECO:0007669"/>
    <property type="project" value="UniProtKB-KW"/>
</dbReference>
<dbReference type="GO" id="GO:0061603">
    <property type="term" value="F:molybdenum cofactor guanylyltransferase activity"/>
    <property type="evidence" value="ECO:0007669"/>
    <property type="project" value="UniProtKB-EC"/>
</dbReference>
<dbReference type="GO" id="GO:0006777">
    <property type="term" value="P:Mo-molybdopterin cofactor biosynthetic process"/>
    <property type="evidence" value="ECO:0007669"/>
    <property type="project" value="UniProtKB-KW"/>
</dbReference>
<dbReference type="CDD" id="cd02503">
    <property type="entry name" value="MobA"/>
    <property type="match status" value="1"/>
</dbReference>
<dbReference type="Gene3D" id="3.90.550.10">
    <property type="entry name" value="Spore Coat Polysaccharide Biosynthesis Protein SpsA, Chain A"/>
    <property type="match status" value="1"/>
</dbReference>
<dbReference type="HAMAP" id="MF_00316">
    <property type="entry name" value="MobA"/>
    <property type="match status" value="1"/>
</dbReference>
<dbReference type="InterPro" id="IPR025877">
    <property type="entry name" value="MobA-like_NTP_Trfase"/>
</dbReference>
<dbReference type="InterPro" id="IPR013482">
    <property type="entry name" value="Molybde_CF_guanTrfase"/>
</dbReference>
<dbReference type="InterPro" id="IPR029044">
    <property type="entry name" value="Nucleotide-diphossugar_trans"/>
</dbReference>
<dbReference type="PANTHER" id="PTHR19136">
    <property type="entry name" value="MOLYBDENUM COFACTOR GUANYLYLTRANSFERASE"/>
    <property type="match status" value="1"/>
</dbReference>
<dbReference type="PANTHER" id="PTHR19136:SF81">
    <property type="entry name" value="MOLYBDENUM COFACTOR GUANYLYLTRANSFERASE"/>
    <property type="match status" value="1"/>
</dbReference>
<dbReference type="Pfam" id="PF12804">
    <property type="entry name" value="NTP_transf_3"/>
    <property type="match status" value="1"/>
</dbReference>
<dbReference type="SUPFAM" id="SSF53448">
    <property type="entry name" value="Nucleotide-diphospho-sugar transferases"/>
    <property type="match status" value="1"/>
</dbReference>
<comment type="function">
    <text evidence="1">Transfers a GMP moiety from GTP to Mo-molybdopterin (Mo-MPT) cofactor (Moco or molybdenum cofactor) to form Mo-molybdopterin guanine dinucleotide (Mo-MGD) cofactor.</text>
</comment>
<comment type="catalytic activity">
    <reaction evidence="1">
        <text>Mo-molybdopterin + GTP + H(+) = Mo-molybdopterin guanine dinucleotide + diphosphate</text>
        <dbReference type="Rhea" id="RHEA:34243"/>
        <dbReference type="ChEBI" id="CHEBI:15378"/>
        <dbReference type="ChEBI" id="CHEBI:33019"/>
        <dbReference type="ChEBI" id="CHEBI:37565"/>
        <dbReference type="ChEBI" id="CHEBI:71302"/>
        <dbReference type="ChEBI" id="CHEBI:71310"/>
        <dbReference type="EC" id="2.7.7.77"/>
    </reaction>
</comment>
<comment type="cofactor">
    <cofactor evidence="1">
        <name>Mg(2+)</name>
        <dbReference type="ChEBI" id="CHEBI:18420"/>
    </cofactor>
</comment>
<comment type="subcellular location">
    <subcellularLocation>
        <location evidence="1">Cytoplasm</location>
    </subcellularLocation>
</comment>
<comment type="domain">
    <text evidence="1">The N-terminal domain determines nucleotide recognition and specific binding, while the C-terminal domain determines the specific binding to the target protein.</text>
</comment>
<comment type="similarity">
    <text evidence="1">Belongs to the MobA family.</text>
</comment>
<proteinExistence type="inferred from homology"/>
<name>MOBA_BACVZ</name>
<organism>
    <name type="scientific">Bacillus velezensis (strain DSM 23117 / BGSC 10A6 / LMG 26770 / FZB42)</name>
    <name type="common">Bacillus amyloliquefaciens subsp. plantarum</name>
    <dbReference type="NCBI Taxonomy" id="326423"/>
    <lineage>
        <taxon>Bacteria</taxon>
        <taxon>Bacillati</taxon>
        <taxon>Bacillota</taxon>
        <taxon>Bacilli</taxon>
        <taxon>Bacillales</taxon>
        <taxon>Bacillaceae</taxon>
        <taxon>Bacillus</taxon>
        <taxon>Bacillus amyloliquefaciens group</taxon>
    </lineage>
</organism>
<keyword id="KW-0963">Cytoplasm</keyword>
<keyword id="KW-0342">GTP-binding</keyword>
<keyword id="KW-0460">Magnesium</keyword>
<keyword id="KW-0479">Metal-binding</keyword>
<keyword id="KW-0501">Molybdenum cofactor biosynthesis</keyword>
<keyword id="KW-0547">Nucleotide-binding</keyword>
<keyword id="KW-0808">Transferase</keyword>
<protein>
    <recommendedName>
        <fullName evidence="1">Probable molybdenum cofactor guanylyltransferase</fullName>
        <shortName evidence="1">MoCo guanylyltransferase</shortName>
        <ecNumber evidence="1">2.7.7.77</ecNumber>
    </recommendedName>
    <alternativeName>
        <fullName evidence="1">GTP:molybdopterin guanylyltransferase</fullName>
    </alternativeName>
    <alternativeName>
        <fullName evidence="1">Mo-MPT guanylyltransferase</fullName>
    </alternativeName>
    <alternativeName>
        <fullName evidence="1">Molybdopterin guanylyltransferase</fullName>
    </alternativeName>
    <alternativeName>
        <fullName evidence="1">Molybdopterin-guanine dinucleotide synthase</fullName>
        <shortName evidence="1">MGD synthase</shortName>
    </alternativeName>
</protein>